<keyword id="KW-0040">ANK repeat</keyword>
<keyword id="KW-0539">Nucleus</keyword>
<keyword id="KW-1185">Reference proteome</keyword>
<keyword id="KW-0677">Repeat</keyword>
<keyword id="KW-0804">Transcription</keyword>
<keyword id="KW-0805">Transcription regulation</keyword>
<sequence length="266" mass="28509">MDSLLNSITIDPAERRKTQNRLAKRKSRIHAGKQQGAMEAANALVGRQPTSVFTSTQQTIKGITSMNGSAEPPNGAVRLIQTASPLNEAAEDYSHTTSASSSSTMGTSLQTWHSHVSSDEITYTGQDMNLYPSSIFTNLSPGSSSSLSMQDSNVILCSPMTSPMTRHVMPSCSKDNYGVQRSKPGSPLHIASAMGHLKVVKTLITYGANVNEVDAAGYSPIHYATRNNHTAIVALLLEKGADWSYNVRSIDTSSGLAEALIHIIET</sequence>
<feature type="chain" id="PRO_0000449947" description="Transcription regulator FGM4">
    <location>
        <begin position="1"/>
        <end position="266"/>
    </location>
</feature>
<feature type="repeat" description="ANK 1" evidence="1">
    <location>
        <begin position="183"/>
        <end position="212"/>
    </location>
</feature>
<feature type="repeat" description="ANK 2" evidence="1">
    <location>
        <begin position="216"/>
        <end position="245"/>
    </location>
</feature>
<feature type="region of interest" description="Disordered" evidence="2">
    <location>
        <begin position="17"/>
        <end position="36"/>
    </location>
</feature>
<feature type="compositionally biased region" description="Basic residues" evidence="2">
    <location>
        <begin position="18"/>
        <end position="31"/>
    </location>
</feature>
<name>FGM4_GIBZE</name>
<protein>
    <recommendedName>
        <fullName evidence="8">Transcription regulator FGM4</fullName>
    </recommendedName>
    <alternativeName>
        <fullName evidence="7">C64 cluster protein NRPS5</fullName>
    </alternativeName>
    <alternativeName>
        <fullName evidence="8">Fg3_54 cluster protein FGM4</fullName>
    </alternativeName>
    <alternativeName>
        <fullName evidence="8">Fusaoctaxin A biosynthesis cluster protein FGM4</fullName>
    </alternativeName>
</protein>
<accession>I1S2J8</accession>
<accession>A0A098E4K0</accession>
<dbReference type="EMBL" id="HG970334">
    <property type="protein sequence ID" value="CEF88559.1"/>
    <property type="molecule type" value="Genomic_DNA"/>
</dbReference>
<dbReference type="RefSeq" id="XP_011325376.1">
    <property type="nucleotide sequence ID" value="XM_011327074.1"/>
</dbReference>
<dbReference type="SMR" id="I1S2J8"/>
<dbReference type="STRING" id="229533.I1S2J8"/>
<dbReference type="KEGG" id="fgr:FGSG_10994"/>
<dbReference type="VEuPathDB" id="FungiDB:FGRAMPH1_01G20967"/>
<dbReference type="eggNOG" id="KOG4177">
    <property type="taxonomic scope" value="Eukaryota"/>
</dbReference>
<dbReference type="HOGENOM" id="CLU_927618_0_0_1"/>
<dbReference type="InParanoid" id="I1S2J8"/>
<dbReference type="OrthoDB" id="132559at110618"/>
<dbReference type="PHI-base" id="PHI:9037"/>
<dbReference type="Proteomes" id="UP000070720">
    <property type="component" value="Chromosome 3"/>
</dbReference>
<dbReference type="GO" id="GO:0005634">
    <property type="term" value="C:nucleus"/>
    <property type="evidence" value="ECO:0007669"/>
    <property type="project" value="UniProtKB-SubCell"/>
</dbReference>
<dbReference type="Gene3D" id="1.25.40.20">
    <property type="entry name" value="Ankyrin repeat-containing domain"/>
    <property type="match status" value="1"/>
</dbReference>
<dbReference type="InterPro" id="IPR002110">
    <property type="entry name" value="Ankyrin_rpt"/>
</dbReference>
<dbReference type="InterPro" id="IPR036770">
    <property type="entry name" value="Ankyrin_rpt-contain_sf"/>
</dbReference>
<dbReference type="PANTHER" id="PTHR24171:SF9">
    <property type="entry name" value="ANKYRIN REPEAT DOMAIN-CONTAINING PROTEIN 39"/>
    <property type="match status" value="1"/>
</dbReference>
<dbReference type="PANTHER" id="PTHR24171">
    <property type="entry name" value="ANKYRIN REPEAT DOMAIN-CONTAINING PROTEIN 39-RELATED"/>
    <property type="match status" value="1"/>
</dbReference>
<dbReference type="Pfam" id="PF12796">
    <property type="entry name" value="Ank_2"/>
    <property type="match status" value="1"/>
</dbReference>
<dbReference type="SMART" id="SM00248">
    <property type="entry name" value="ANK"/>
    <property type="match status" value="2"/>
</dbReference>
<dbReference type="SUPFAM" id="SSF48403">
    <property type="entry name" value="Ankyrin repeat"/>
    <property type="match status" value="1"/>
</dbReference>
<dbReference type="PROSITE" id="PS50297">
    <property type="entry name" value="ANK_REP_REGION"/>
    <property type="match status" value="1"/>
</dbReference>
<dbReference type="PROSITE" id="PS50088">
    <property type="entry name" value="ANK_REPEAT"/>
    <property type="match status" value="2"/>
</dbReference>
<gene>
    <name evidence="8" type="primary">FGM4</name>
    <name type="ORF">FG10994</name>
    <name type="ORF">FGRAMPH1_01T20967</name>
</gene>
<reference key="1">
    <citation type="journal article" date="2007" name="Science">
        <title>The Fusarium graminearum genome reveals a link between localized polymorphism and pathogen specialization.</title>
        <authorList>
            <person name="Cuomo C.A."/>
            <person name="Gueldener U."/>
            <person name="Xu J.-R."/>
            <person name="Trail F."/>
            <person name="Turgeon B.G."/>
            <person name="Di Pietro A."/>
            <person name="Walton J.D."/>
            <person name="Ma L.-J."/>
            <person name="Baker S.E."/>
            <person name="Rep M."/>
            <person name="Adam G."/>
            <person name="Antoniw J."/>
            <person name="Baldwin T."/>
            <person name="Calvo S.E."/>
            <person name="Chang Y.-L."/>
            <person name="DeCaprio D."/>
            <person name="Gale L.R."/>
            <person name="Gnerre S."/>
            <person name="Goswami R.S."/>
            <person name="Hammond-Kosack K."/>
            <person name="Harris L.J."/>
            <person name="Hilburn K."/>
            <person name="Kennell J.C."/>
            <person name="Kroken S."/>
            <person name="Magnuson J.K."/>
            <person name="Mannhaupt G."/>
            <person name="Mauceli E.W."/>
            <person name="Mewes H.-W."/>
            <person name="Mitterbauer R."/>
            <person name="Muehlbauer G."/>
            <person name="Muensterkoetter M."/>
            <person name="Nelson D."/>
            <person name="O'Donnell K."/>
            <person name="Ouellet T."/>
            <person name="Qi W."/>
            <person name="Quesneville H."/>
            <person name="Roncero M.I.G."/>
            <person name="Seong K.-Y."/>
            <person name="Tetko I.V."/>
            <person name="Urban M."/>
            <person name="Waalwijk C."/>
            <person name="Ward T.J."/>
            <person name="Yao J."/>
            <person name="Birren B.W."/>
            <person name="Kistler H.C."/>
        </authorList>
    </citation>
    <scope>NUCLEOTIDE SEQUENCE [LARGE SCALE GENOMIC DNA]</scope>
    <source>
        <strain>ATCC MYA-4620 / CBS 123657 / FGSC 9075 / NRRL 31084 / PH-1</strain>
    </source>
</reference>
<reference key="2">
    <citation type="journal article" date="2010" name="Nature">
        <title>Comparative genomics reveals mobile pathogenicity chromosomes in Fusarium.</title>
        <authorList>
            <person name="Ma L.-J."/>
            <person name="van der Does H.C."/>
            <person name="Borkovich K.A."/>
            <person name="Coleman J.J."/>
            <person name="Daboussi M.-J."/>
            <person name="Di Pietro A."/>
            <person name="Dufresne M."/>
            <person name="Freitag M."/>
            <person name="Grabherr M."/>
            <person name="Henrissat B."/>
            <person name="Houterman P.M."/>
            <person name="Kang S."/>
            <person name="Shim W.-B."/>
            <person name="Woloshuk C."/>
            <person name="Xie X."/>
            <person name="Xu J.-R."/>
            <person name="Antoniw J."/>
            <person name="Baker S.E."/>
            <person name="Bluhm B.H."/>
            <person name="Breakspear A."/>
            <person name="Brown D.W."/>
            <person name="Butchko R.A.E."/>
            <person name="Chapman S."/>
            <person name="Coulson R."/>
            <person name="Coutinho P.M."/>
            <person name="Danchin E.G.J."/>
            <person name="Diener A."/>
            <person name="Gale L.R."/>
            <person name="Gardiner D.M."/>
            <person name="Goff S."/>
            <person name="Hammond-Kosack K.E."/>
            <person name="Hilburn K."/>
            <person name="Hua-Van A."/>
            <person name="Jonkers W."/>
            <person name="Kazan K."/>
            <person name="Kodira C.D."/>
            <person name="Koehrsen M."/>
            <person name="Kumar L."/>
            <person name="Lee Y.-H."/>
            <person name="Li L."/>
            <person name="Manners J.M."/>
            <person name="Miranda-Saavedra D."/>
            <person name="Mukherjee M."/>
            <person name="Park G."/>
            <person name="Park J."/>
            <person name="Park S.-Y."/>
            <person name="Proctor R.H."/>
            <person name="Regev A."/>
            <person name="Ruiz-Roldan M.C."/>
            <person name="Sain D."/>
            <person name="Sakthikumar S."/>
            <person name="Sykes S."/>
            <person name="Schwartz D.C."/>
            <person name="Turgeon B.G."/>
            <person name="Wapinski I."/>
            <person name="Yoder O."/>
            <person name="Young S."/>
            <person name="Zeng Q."/>
            <person name="Zhou S."/>
            <person name="Galagan J."/>
            <person name="Cuomo C.A."/>
            <person name="Kistler H.C."/>
            <person name="Rep M."/>
        </authorList>
    </citation>
    <scope>GENOME REANNOTATION</scope>
    <source>
        <strain>ATCC MYA-4620 / CBS 123657 / FGSC 9075 / NRRL 31084 / PH-1</strain>
    </source>
</reference>
<reference key="3">
    <citation type="journal article" date="2015" name="BMC Genomics">
        <title>The completed genome sequence of the pathogenic ascomycete fungus Fusarium graminearum.</title>
        <authorList>
            <person name="King R."/>
            <person name="Urban M."/>
            <person name="Hammond-Kosack M.C.U."/>
            <person name="Hassani-Pak K."/>
            <person name="Hammond-Kosack K.E."/>
        </authorList>
    </citation>
    <scope>NUCLEOTIDE SEQUENCE [LARGE SCALE GENOMIC DNA]</scope>
    <source>
        <strain>ATCC MYA-4620 / CBS 123657 / FGSC 9075 / NRRL 31084 / PH-1</strain>
    </source>
</reference>
<reference key="4">
    <citation type="submission" date="2017-01" db="UniProtKB">
        <authorList>
            <consortium name="EnsemblFungi"/>
        </authorList>
    </citation>
    <scope>IDENTIFICATION</scope>
    <source>
        <strain>ATCC MYA-4620 / CBS 123657 / FGSC 9075 / NRRL 31084 / PH-1</strain>
    </source>
</reference>
<reference key="5">
    <citation type="journal article" date="2012" name="Plant Cell">
        <title>In planta stage-specific fungal gene profiling elucidates the molecular strategies of Fusarium graminearum growing inside wheat coleoptiles.</title>
        <authorList>
            <person name="Zhang X.W."/>
            <person name="Jia L.J."/>
            <person name="Zhang Y."/>
            <person name="Jiang G."/>
            <person name="Li X."/>
            <person name="Zhang D."/>
            <person name="Tang W.H."/>
        </authorList>
    </citation>
    <scope>INDUCTION</scope>
</reference>
<reference key="6">
    <citation type="journal article" date="2014" name="PLoS ONE">
        <title>The Fusarium graminearum genome reveals more secondary metabolite gene clusters and hints of horizontal gene transfer.</title>
        <authorList>
            <person name="Sieber C.M."/>
            <person name="Lee W."/>
            <person name="Wong P."/>
            <person name="Muensterkoetter M."/>
            <person name="Mewes H.W."/>
            <person name="Schmeitzl C."/>
            <person name="Varga E."/>
            <person name="Berthiller F."/>
            <person name="Adam G."/>
            <person name="Gueldener U."/>
        </authorList>
    </citation>
    <scope>IDENTIFICATION</scope>
    <scope>INDUCTION</scope>
</reference>
<reference key="7">
    <citation type="journal article" date="2019" name="Nat. Commun.">
        <title>A linear nonribosomal octapeptide from Fusarium graminearum facilitates cell-to-cell invasion of wheat.</title>
        <authorList>
            <person name="Jia L.J."/>
            <person name="Tang H.Y."/>
            <person name="Wang W.Q."/>
            <person name="Yuan T.L."/>
            <person name="Wei W.Q."/>
            <person name="Pang B."/>
            <person name="Gong X.M."/>
            <person name="Wang S.F."/>
            <person name="Li Y.J."/>
            <person name="Zhang D."/>
            <person name="Liu W."/>
            <person name="Tang W.H."/>
        </authorList>
    </citation>
    <scope>FUNCTION</scope>
    <scope>DISRUPTION PHENOTYPE</scope>
    <scope>SUBCELLULAR LOCATION</scope>
</reference>
<reference key="8">
    <citation type="journal article" date="2019" name="Toxins">
        <title>Fusaoctaxin A, an example of a two-step mechanism for non-ribosomal peptide assembly and maturation in fungi.</title>
        <authorList>
            <person name="Westphal K.R."/>
            <person name="Nielsen K.A.H."/>
            <person name="Wollenberg R.D."/>
            <person name="Moellehoej M.B."/>
            <person name="Bachleitner S."/>
            <person name="Studt L."/>
            <person name="Lysoee E."/>
            <person name="Giese H."/>
            <person name="Wimmer R."/>
            <person name="Soerensen J.L."/>
            <person name="Sondergaard T.E."/>
        </authorList>
    </citation>
    <scope>FUNCTION</scope>
</reference>
<evidence type="ECO:0000255" key="1"/>
<evidence type="ECO:0000256" key="2">
    <source>
        <dbReference type="SAM" id="MobiDB-lite"/>
    </source>
</evidence>
<evidence type="ECO:0000269" key="3">
    <source>
    </source>
</evidence>
<evidence type="ECO:0000269" key="4">
    <source>
    </source>
</evidence>
<evidence type="ECO:0000269" key="5">
    <source>
    </source>
</evidence>
<evidence type="ECO:0000269" key="6">
    <source>
    </source>
</evidence>
<evidence type="ECO:0000303" key="7">
    <source>
    </source>
</evidence>
<evidence type="ECO:0000303" key="8">
    <source>
    </source>
</evidence>
<proteinExistence type="evidence at transcript level"/>
<organism>
    <name type="scientific">Gibberella zeae (strain ATCC MYA-4620 / CBS 123657 / FGSC 9075 / NRRL 31084 / PH-1)</name>
    <name type="common">Wheat head blight fungus</name>
    <name type="synonym">Fusarium graminearum</name>
    <dbReference type="NCBI Taxonomy" id="229533"/>
    <lineage>
        <taxon>Eukaryota</taxon>
        <taxon>Fungi</taxon>
        <taxon>Dikarya</taxon>
        <taxon>Ascomycota</taxon>
        <taxon>Pezizomycotina</taxon>
        <taxon>Sordariomycetes</taxon>
        <taxon>Hypocreomycetidae</taxon>
        <taxon>Hypocreales</taxon>
        <taxon>Nectriaceae</taxon>
        <taxon>Fusarium</taxon>
    </lineage>
</organism>
<comment type="function">
    <text evidence="5">Transcription regulator; part of the Fg3_54/C64 gene cluster that mediates the biosynthesis of the octapeptide fusaoctaxin A, a virulence factor that is required for cell-to-cell invasiveness of plant host (PubMed:30804501). Positively regulates the expression the Fg3_54/C64 gene cluster (PubMed:30804501).</text>
</comment>
<comment type="subcellular location">
    <subcellularLocation>
        <location evidence="5">Nucleus</location>
    </subcellularLocation>
</comment>
<comment type="induction">
    <text evidence="3 4 6">Expression is induced during infection of coleoptiles of wheat seedlings (PubMed:23266949, PubMed:25333987). The fusaoctaxin A gene cluster is silenced by H3K27 trimethylation by the histone methyltransferase KMT6 (PubMed:31100892).</text>
</comment>
<comment type="disruption phenotype">
    <text evidence="5">Produces significantly smaller lesions and fewer spikelets with blight symptoms on susceptible wheat cultivars.</text>
</comment>